<accession>A4YW92</accession>
<feature type="chain" id="PRO_1000057494" description="Transcription antitermination protein NusB">
    <location>
        <begin position="1"/>
        <end position="168"/>
    </location>
</feature>
<gene>
    <name evidence="1" type="primary">nusB</name>
    <name type="ordered locus">BRADO4425</name>
</gene>
<sequence length="168" mass="18777">MAENKPFRGPIRANTDRKANRRGAARLAAVQALYQMDIAGAGINDVLAEFESHWLGNEVEGEQYLPAEAAFFRDIVSGVVRDQTKIDPVLDTALERGWPLQRIEAILRAVLRAGAYELERRKDVPAKVVVSEYVDIAHAFVERDETGMVNAVLEQLARQYRGDEMGPK</sequence>
<keyword id="KW-1185">Reference proteome</keyword>
<keyword id="KW-0694">RNA-binding</keyword>
<keyword id="KW-0804">Transcription</keyword>
<keyword id="KW-0889">Transcription antitermination</keyword>
<keyword id="KW-0805">Transcription regulation</keyword>
<dbReference type="EMBL" id="CU234118">
    <property type="protein sequence ID" value="CAL78168.1"/>
    <property type="molecule type" value="Genomic_DNA"/>
</dbReference>
<dbReference type="RefSeq" id="WP_011927283.1">
    <property type="nucleotide sequence ID" value="NC_009445.1"/>
</dbReference>
<dbReference type="SMR" id="A4YW92"/>
<dbReference type="STRING" id="114615.BRADO4425"/>
<dbReference type="KEGG" id="bra:BRADO4425"/>
<dbReference type="eggNOG" id="COG0781">
    <property type="taxonomic scope" value="Bacteria"/>
</dbReference>
<dbReference type="HOGENOM" id="CLU_087843_4_0_5"/>
<dbReference type="OrthoDB" id="9797817at2"/>
<dbReference type="Proteomes" id="UP000001994">
    <property type="component" value="Chromosome"/>
</dbReference>
<dbReference type="GO" id="GO:0005829">
    <property type="term" value="C:cytosol"/>
    <property type="evidence" value="ECO:0007669"/>
    <property type="project" value="TreeGrafter"/>
</dbReference>
<dbReference type="GO" id="GO:0003723">
    <property type="term" value="F:RNA binding"/>
    <property type="evidence" value="ECO:0007669"/>
    <property type="project" value="UniProtKB-UniRule"/>
</dbReference>
<dbReference type="GO" id="GO:0006353">
    <property type="term" value="P:DNA-templated transcription termination"/>
    <property type="evidence" value="ECO:0007669"/>
    <property type="project" value="UniProtKB-UniRule"/>
</dbReference>
<dbReference type="GO" id="GO:0031564">
    <property type="term" value="P:transcription antitermination"/>
    <property type="evidence" value="ECO:0007669"/>
    <property type="project" value="UniProtKB-KW"/>
</dbReference>
<dbReference type="Gene3D" id="1.10.940.10">
    <property type="entry name" value="NusB-like"/>
    <property type="match status" value="1"/>
</dbReference>
<dbReference type="HAMAP" id="MF_00073">
    <property type="entry name" value="NusB"/>
    <property type="match status" value="1"/>
</dbReference>
<dbReference type="InterPro" id="IPR035926">
    <property type="entry name" value="NusB-like_sf"/>
</dbReference>
<dbReference type="InterPro" id="IPR011605">
    <property type="entry name" value="NusB_fam"/>
</dbReference>
<dbReference type="InterPro" id="IPR006027">
    <property type="entry name" value="NusB_RsmB_TIM44"/>
</dbReference>
<dbReference type="NCBIfam" id="TIGR01951">
    <property type="entry name" value="nusB"/>
    <property type="match status" value="1"/>
</dbReference>
<dbReference type="PANTHER" id="PTHR11078:SF3">
    <property type="entry name" value="ANTITERMINATION NUSB DOMAIN-CONTAINING PROTEIN"/>
    <property type="match status" value="1"/>
</dbReference>
<dbReference type="PANTHER" id="PTHR11078">
    <property type="entry name" value="N UTILIZATION SUBSTANCE PROTEIN B-RELATED"/>
    <property type="match status" value="1"/>
</dbReference>
<dbReference type="Pfam" id="PF01029">
    <property type="entry name" value="NusB"/>
    <property type="match status" value="1"/>
</dbReference>
<dbReference type="SUPFAM" id="SSF48013">
    <property type="entry name" value="NusB-like"/>
    <property type="match status" value="1"/>
</dbReference>
<name>NUSB_BRASO</name>
<comment type="function">
    <text evidence="1">Involved in transcription antitermination. Required for transcription of ribosomal RNA (rRNA) genes. Binds specifically to the boxA antiterminator sequence of the ribosomal RNA (rrn) operons.</text>
</comment>
<comment type="similarity">
    <text evidence="1">Belongs to the NusB family.</text>
</comment>
<reference key="1">
    <citation type="journal article" date="2007" name="Science">
        <title>Legumes symbioses: absence of nod genes in photosynthetic bradyrhizobia.</title>
        <authorList>
            <person name="Giraud E."/>
            <person name="Moulin L."/>
            <person name="Vallenet D."/>
            <person name="Barbe V."/>
            <person name="Cytryn E."/>
            <person name="Avarre J.-C."/>
            <person name="Jaubert M."/>
            <person name="Simon D."/>
            <person name="Cartieaux F."/>
            <person name="Prin Y."/>
            <person name="Bena G."/>
            <person name="Hannibal L."/>
            <person name="Fardoux J."/>
            <person name="Kojadinovic M."/>
            <person name="Vuillet L."/>
            <person name="Lajus A."/>
            <person name="Cruveiller S."/>
            <person name="Rouy Z."/>
            <person name="Mangenot S."/>
            <person name="Segurens B."/>
            <person name="Dossat C."/>
            <person name="Franck W.L."/>
            <person name="Chang W.-S."/>
            <person name="Saunders E."/>
            <person name="Bruce D."/>
            <person name="Richardson P."/>
            <person name="Normand P."/>
            <person name="Dreyfus B."/>
            <person name="Pignol D."/>
            <person name="Stacey G."/>
            <person name="Emerich D."/>
            <person name="Vermeglio A."/>
            <person name="Medigue C."/>
            <person name="Sadowsky M."/>
        </authorList>
    </citation>
    <scope>NUCLEOTIDE SEQUENCE [LARGE SCALE GENOMIC DNA]</scope>
    <source>
        <strain>ORS 278</strain>
    </source>
</reference>
<proteinExistence type="inferred from homology"/>
<protein>
    <recommendedName>
        <fullName evidence="1">Transcription antitermination protein NusB</fullName>
    </recommendedName>
    <alternativeName>
        <fullName evidence="1">Antitermination factor NusB</fullName>
    </alternativeName>
</protein>
<organism>
    <name type="scientific">Bradyrhizobium sp. (strain ORS 278)</name>
    <dbReference type="NCBI Taxonomy" id="114615"/>
    <lineage>
        <taxon>Bacteria</taxon>
        <taxon>Pseudomonadati</taxon>
        <taxon>Pseudomonadota</taxon>
        <taxon>Alphaproteobacteria</taxon>
        <taxon>Hyphomicrobiales</taxon>
        <taxon>Nitrobacteraceae</taxon>
        <taxon>Bradyrhizobium</taxon>
    </lineage>
</organism>
<evidence type="ECO:0000255" key="1">
    <source>
        <dbReference type="HAMAP-Rule" id="MF_00073"/>
    </source>
</evidence>